<evidence type="ECO:0000250" key="1">
    <source>
        <dbReference type="UniProtKB" id="P01721"/>
    </source>
</evidence>
<evidence type="ECO:0000255" key="2">
    <source>
        <dbReference type="PROSITE-ProRule" id="PRU00114"/>
    </source>
</evidence>
<evidence type="ECO:0000269" key="3">
    <source>
    </source>
</evidence>
<evidence type="ECO:0000303" key="4">
    <source>
    </source>
</evidence>
<evidence type="ECO:0000303" key="5">
    <source>
    </source>
</evidence>
<evidence type="ECO:0000303" key="6">
    <source>
    </source>
</evidence>
<evidence type="ECO:0000303" key="7">
    <source>
    </source>
</evidence>
<evidence type="ECO:0000303" key="8">
    <source>
    </source>
</evidence>
<evidence type="ECO:0000303" key="9">
    <source ref="4"/>
</evidence>
<evidence type="ECO:0000305" key="10"/>
<evidence type="ECO:0000305" key="11">
    <source>
    </source>
</evidence>
<dbReference type="EMBL" id="AC244250">
    <property type="status" value="NOT_ANNOTATED_CDS"/>
    <property type="molecule type" value="Genomic_DNA"/>
</dbReference>
<dbReference type="PIR" id="A01983">
    <property type="entry name" value="L4HUHL"/>
</dbReference>
<dbReference type="EMDB" id="EMD-23581"/>
<dbReference type="EMDB" id="EMD-23582"/>
<dbReference type="EMDB" id="EMD-24075"/>
<dbReference type="EMDB" id="EMD-25104"/>
<dbReference type="EMDB" id="EMD-28184"/>
<dbReference type="EMDB" id="EMD-36578"/>
<dbReference type="EMDB" id="EMD-7884"/>
<dbReference type="EMDB" id="EMD-7885"/>
<dbReference type="SMR" id="P01717"/>
<dbReference type="FunCoup" id="P01717">
    <property type="interactions" value="411"/>
</dbReference>
<dbReference type="IMGT_GENE-DB" id="IGLV3-25"/>
<dbReference type="BioMuta" id="IGLV3-25"/>
<dbReference type="DMDM" id="126568"/>
<dbReference type="jPOST" id="P01717"/>
<dbReference type="MassIVE" id="P01717"/>
<dbReference type="Ensembl" id="ENST00000390305.2">
    <property type="protein sequence ID" value="ENSP00000374840.2"/>
    <property type="gene ID" value="ENSG00000211659.2"/>
</dbReference>
<dbReference type="AGR" id="HGNC:5908"/>
<dbReference type="GeneCards" id="IGLV3-25"/>
<dbReference type="HGNC" id="HGNC:5908">
    <property type="gene designation" value="IGLV3-25"/>
</dbReference>
<dbReference type="HPA" id="ENSG00000211659">
    <property type="expression patterns" value="Tissue enhanced (lymphoid tissue, stomach)"/>
</dbReference>
<dbReference type="neXtProt" id="NX_P01717"/>
<dbReference type="OpenTargets" id="ENSG00000211659"/>
<dbReference type="VEuPathDB" id="HostDB:ENSG00000211659"/>
<dbReference type="GeneTree" id="ENSGT00940000153120"/>
<dbReference type="InParanoid" id="P01717"/>
<dbReference type="OMA" id="QSARITC"/>
<dbReference type="OrthoDB" id="9531984at2759"/>
<dbReference type="PAN-GO" id="P01717">
    <property type="GO annotations" value="3 GO annotations based on evolutionary models"/>
</dbReference>
<dbReference type="PathwayCommons" id="P01717"/>
<dbReference type="Reactome" id="R-HSA-166663">
    <property type="pathway name" value="Initial triggering of complement"/>
</dbReference>
<dbReference type="Reactome" id="R-HSA-173623">
    <property type="pathway name" value="Classical antibody-mediated complement activation"/>
</dbReference>
<dbReference type="Reactome" id="R-HSA-198933">
    <property type="pathway name" value="Immunoregulatory interactions between a Lymphoid and a non-Lymphoid cell"/>
</dbReference>
<dbReference type="Reactome" id="R-HSA-202733">
    <property type="pathway name" value="Cell surface interactions at the vascular wall"/>
</dbReference>
<dbReference type="Reactome" id="R-HSA-2029481">
    <property type="pathway name" value="FCGR activation"/>
</dbReference>
<dbReference type="Reactome" id="R-HSA-2029482">
    <property type="pathway name" value="Regulation of actin dynamics for phagocytic cup formation"/>
</dbReference>
<dbReference type="Reactome" id="R-HSA-2029485">
    <property type="pathway name" value="Role of phospholipids in phagocytosis"/>
</dbReference>
<dbReference type="Reactome" id="R-HSA-2168880">
    <property type="pathway name" value="Scavenging of heme from plasma"/>
</dbReference>
<dbReference type="Reactome" id="R-HSA-2454202">
    <property type="pathway name" value="Fc epsilon receptor (FCERI) signaling"/>
</dbReference>
<dbReference type="Reactome" id="R-HSA-2730905">
    <property type="pathway name" value="Role of LAT2/NTAL/LAB on calcium mobilization"/>
</dbReference>
<dbReference type="Reactome" id="R-HSA-2871796">
    <property type="pathway name" value="FCERI mediated MAPK activation"/>
</dbReference>
<dbReference type="Reactome" id="R-HSA-2871809">
    <property type="pathway name" value="FCERI mediated Ca+2 mobilization"/>
</dbReference>
<dbReference type="Reactome" id="R-HSA-2871837">
    <property type="pathway name" value="FCERI mediated NF-kB activation"/>
</dbReference>
<dbReference type="Reactome" id="R-HSA-5690714">
    <property type="pathway name" value="CD22 mediated BCR regulation"/>
</dbReference>
<dbReference type="Reactome" id="R-HSA-9664323">
    <property type="pathway name" value="FCGR3A-mediated IL10 synthesis"/>
</dbReference>
<dbReference type="Reactome" id="R-HSA-9664422">
    <property type="pathway name" value="FCGR3A-mediated phagocytosis"/>
</dbReference>
<dbReference type="Reactome" id="R-HSA-9679191">
    <property type="pathway name" value="Potential therapeutics for SARS"/>
</dbReference>
<dbReference type="Reactome" id="R-HSA-977606">
    <property type="pathway name" value="Regulation of Complement cascade"/>
</dbReference>
<dbReference type="Reactome" id="R-HSA-983695">
    <property type="pathway name" value="Antigen activates B Cell Receptor (BCR) leading to generation of second messengers"/>
</dbReference>
<dbReference type="ChiTaRS" id="IGLV3-25">
    <property type="organism name" value="human"/>
</dbReference>
<dbReference type="Pharos" id="P01717">
    <property type="development level" value="Tdark"/>
</dbReference>
<dbReference type="PRO" id="PR:P01717"/>
<dbReference type="Proteomes" id="UP000005640">
    <property type="component" value="Chromosome 22"/>
</dbReference>
<dbReference type="RNAct" id="P01717">
    <property type="molecule type" value="protein"/>
</dbReference>
<dbReference type="Bgee" id="ENSG00000211659">
    <property type="expression patterns" value="Expressed in rectum and 136 other cell types or tissues"/>
</dbReference>
<dbReference type="GO" id="GO:0072562">
    <property type="term" value="C:blood microparticle"/>
    <property type="evidence" value="ECO:0007005"/>
    <property type="project" value="UniProtKB"/>
</dbReference>
<dbReference type="GO" id="GO:0005576">
    <property type="term" value="C:extracellular region"/>
    <property type="evidence" value="ECO:0000304"/>
    <property type="project" value="Reactome"/>
</dbReference>
<dbReference type="GO" id="GO:0019814">
    <property type="term" value="C:immunoglobulin complex"/>
    <property type="evidence" value="ECO:0000318"/>
    <property type="project" value="GO_Central"/>
</dbReference>
<dbReference type="GO" id="GO:0005886">
    <property type="term" value="C:plasma membrane"/>
    <property type="evidence" value="ECO:0000304"/>
    <property type="project" value="Reactome"/>
</dbReference>
<dbReference type="GO" id="GO:0003823">
    <property type="term" value="F:antigen binding"/>
    <property type="evidence" value="ECO:0000303"/>
    <property type="project" value="UniProtKB"/>
</dbReference>
<dbReference type="GO" id="GO:0002250">
    <property type="term" value="P:adaptive immune response"/>
    <property type="evidence" value="ECO:0007669"/>
    <property type="project" value="UniProtKB-KW"/>
</dbReference>
<dbReference type="GO" id="GO:0006955">
    <property type="term" value="P:immune response"/>
    <property type="evidence" value="ECO:0000318"/>
    <property type="project" value="GO_Central"/>
</dbReference>
<dbReference type="FunFam" id="2.60.40.10:FF:000620">
    <property type="entry name" value="Immunoglobulin lambda locus"/>
    <property type="match status" value="1"/>
</dbReference>
<dbReference type="Gene3D" id="2.60.40.10">
    <property type="entry name" value="Immunoglobulins"/>
    <property type="match status" value="1"/>
</dbReference>
<dbReference type="InterPro" id="IPR007110">
    <property type="entry name" value="Ig-like_dom"/>
</dbReference>
<dbReference type="InterPro" id="IPR036179">
    <property type="entry name" value="Ig-like_dom_sf"/>
</dbReference>
<dbReference type="InterPro" id="IPR013783">
    <property type="entry name" value="Ig-like_fold"/>
</dbReference>
<dbReference type="InterPro" id="IPR003599">
    <property type="entry name" value="Ig_sub"/>
</dbReference>
<dbReference type="InterPro" id="IPR013106">
    <property type="entry name" value="Ig_V-set"/>
</dbReference>
<dbReference type="InterPro" id="IPR050150">
    <property type="entry name" value="IgV_Light_Chain"/>
</dbReference>
<dbReference type="PANTHER" id="PTHR23267">
    <property type="entry name" value="IMMUNOGLOBULIN LIGHT CHAIN"/>
    <property type="match status" value="1"/>
</dbReference>
<dbReference type="Pfam" id="PF07686">
    <property type="entry name" value="V-set"/>
    <property type="match status" value="1"/>
</dbReference>
<dbReference type="SMART" id="SM00409">
    <property type="entry name" value="IG"/>
    <property type="match status" value="1"/>
</dbReference>
<dbReference type="SMART" id="SM00406">
    <property type="entry name" value="IGv"/>
    <property type="match status" value="1"/>
</dbReference>
<dbReference type="SUPFAM" id="SSF48726">
    <property type="entry name" value="Immunoglobulin"/>
    <property type="match status" value="1"/>
</dbReference>
<dbReference type="PROSITE" id="PS50835">
    <property type="entry name" value="IG_LIKE"/>
    <property type="match status" value="1"/>
</dbReference>
<reference key="1">
    <citation type="journal article" date="1999" name="Nature">
        <title>The DNA sequence of human chromosome 22.</title>
        <authorList>
            <person name="Dunham I."/>
            <person name="Hunt A.R."/>
            <person name="Collins J.E."/>
            <person name="Bruskiewich R."/>
            <person name="Beare D.M."/>
            <person name="Clamp M."/>
            <person name="Smink L.J."/>
            <person name="Ainscough R."/>
            <person name="Almeida J.P."/>
            <person name="Babbage A.K."/>
            <person name="Bagguley C."/>
            <person name="Bailey J."/>
            <person name="Barlow K.F."/>
            <person name="Bates K.N."/>
            <person name="Beasley O.P."/>
            <person name="Bird C.P."/>
            <person name="Blakey S.E."/>
            <person name="Bridgeman A.M."/>
            <person name="Buck D."/>
            <person name="Burgess J."/>
            <person name="Burrill W.D."/>
            <person name="Burton J."/>
            <person name="Carder C."/>
            <person name="Carter N.P."/>
            <person name="Chen Y."/>
            <person name="Clark G."/>
            <person name="Clegg S.M."/>
            <person name="Cobley V.E."/>
            <person name="Cole C.G."/>
            <person name="Collier R.E."/>
            <person name="Connor R."/>
            <person name="Conroy D."/>
            <person name="Corby N.R."/>
            <person name="Coville G.J."/>
            <person name="Cox A.V."/>
            <person name="Davis J."/>
            <person name="Dawson E."/>
            <person name="Dhami P.D."/>
            <person name="Dockree C."/>
            <person name="Dodsworth S.J."/>
            <person name="Durbin R.M."/>
            <person name="Ellington A.G."/>
            <person name="Evans K.L."/>
            <person name="Fey J.M."/>
            <person name="Fleming K."/>
            <person name="French L."/>
            <person name="Garner A.A."/>
            <person name="Gilbert J.G.R."/>
            <person name="Goward M.E."/>
            <person name="Grafham D.V."/>
            <person name="Griffiths M.N.D."/>
            <person name="Hall C."/>
            <person name="Hall R.E."/>
            <person name="Hall-Tamlyn G."/>
            <person name="Heathcott R.W."/>
            <person name="Ho S."/>
            <person name="Holmes S."/>
            <person name="Hunt S.E."/>
            <person name="Jones M.C."/>
            <person name="Kershaw J."/>
            <person name="Kimberley A.M."/>
            <person name="King A."/>
            <person name="Laird G.K."/>
            <person name="Langford C.F."/>
            <person name="Leversha M.A."/>
            <person name="Lloyd C."/>
            <person name="Lloyd D.M."/>
            <person name="Martyn I.D."/>
            <person name="Mashreghi-Mohammadi M."/>
            <person name="Matthews L.H."/>
            <person name="Mccann O.T."/>
            <person name="Mcclay J."/>
            <person name="Mclaren S."/>
            <person name="McMurray A.A."/>
            <person name="Milne S.A."/>
            <person name="Mortimore B.J."/>
            <person name="Odell C.N."/>
            <person name="Pavitt R."/>
            <person name="Pearce A.V."/>
            <person name="Pearson D."/>
            <person name="Phillimore B.J.C.T."/>
            <person name="Phillips S.H."/>
            <person name="Plumb R.W."/>
            <person name="Ramsay H."/>
            <person name="Ramsey Y."/>
            <person name="Rogers L."/>
            <person name="Ross M.T."/>
            <person name="Scott C.E."/>
            <person name="Sehra H.K."/>
            <person name="Skuce C.D."/>
            <person name="Smalley S."/>
            <person name="Smith M.L."/>
            <person name="Soderlund C."/>
            <person name="Spragon L."/>
            <person name="Steward C.A."/>
            <person name="Sulston J.E."/>
            <person name="Swann R.M."/>
            <person name="Vaudin M."/>
            <person name="Wall M."/>
            <person name="Wallis J.M."/>
            <person name="Whiteley M.N."/>
            <person name="Willey D.L."/>
            <person name="Williams L."/>
            <person name="Williams S.A."/>
            <person name="Williamson H."/>
            <person name="Wilmer T.E."/>
            <person name="Wilming L."/>
            <person name="Wright C.L."/>
            <person name="Hubbard T."/>
            <person name="Bentley D.R."/>
            <person name="Beck S."/>
            <person name="Rogers J."/>
            <person name="Shimizu N."/>
            <person name="Minoshima S."/>
            <person name="Kawasaki K."/>
            <person name="Sasaki T."/>
            <person name="Asakawa S."/>
            <person name="Kudoh J."/>
            <person name="Shintani A."/>
            <person name="Shibuya K."/>
            <person name="Yoshizaki Y."/>
            <person name="Aoki N."/>
            <person name="Mitsuyama S."/>
            <person name="Roe B.A."/>
            <person name="Chen F."/>
            <person name="Chu L."/>
            <person name="Crabtree J."/>
            <person name="Deschamps S."/>
            <person name="Do A."/>
            <person name="Do T."/>
            <person name="Dorman A."/>
            <person name="Fang F."/>
            <person name="Fu Y."/>
            <person name="Hu P."/>
            <person name="Hua A."/>
            <person name="Kenton S."/>
            <person name="Lai H."/>
            <person name="Lao H.I."/>
            <person name="Lewis J."/>
            <person name="Lewis S."/>
            <person name="Lin S.-P."/>
            <person name="Loh P."/>
            <person name="Malaj E."/>
            <person name="Nguyen T."/>
            <person name="Pan H."/>
            <person name="Phan S."/>
            <person name="Qi S."/>
            <person name="Qian Y."/>
            <person name="Ray L."/>
            <person name="Ren Q."/>
            <person name="Shaull S."/>
            <person name="Sloan D."/>
            <person name="Song L."/>
            <person name="Wang Q."/>
            <person name="Wang Y."/>
            <person name="Wang Z."/>
            <person name="White J."/>
            <person name="Willingham D."/>
            <person name="Wu H."/>
            <person name="Yao Z."/>
            <person name="Zhan M."/>
            <person name="Zhang G."/>
            <person name="Chissoe S."/>
            <person name="Murray J."/>
            <person name="Miller N."/>
            <person name="Minx P."/>
            <person name="Fulton R."/>
            <person name="Johnson D."/>
            <person name="Bemis G."/>
            <person name="Bentley D."/>
            <person name="Bradshaw H."/>
            <person name="Bourne S."/>
            <person name="Cordes M."/>
            <person name="Du Z."/>
            <person name="Fulton L."/>
            <person name="Goela D."/>
            <person name="Graves T."/>
            <person name="Hawkins J."/>
            <person name="Hinds K."/>
            <person name="Kemp K."/>
            <person name="Latreille P."/>
            <person name="Layman D."/>
            <person name="Ozersky P."/>
            <person name="Rohlfing T."/>
            <person name="Scheet P."/>
            <person name="Walker C."/>
            <person name="Wamsley A."/>
            <person name="Wohldmann P."/>
            <person name="Pepin K."/>
            <person name="Nelson J."/>
            <person name="Korf I."/>
            <person name="Bedell J.A."/>
            <person name="Hillier L.W."/>
            <person name="Mardis E."/>
            <person name="Waterston R."/>
            <person name="Wilson R."/>
            <person name="Emanuel B.S."/>
            <person name="Shaikh T."/>
            <person name="Kurahashi H."/>
            <person name="Saitta S."/>
            <person name="Budarf M.L."/>
            <person name="McDermid H.E."/>
            <person name="Johnson A."/>
            <person name="Wong A.C.C."/>
            <person name="Morrow B.E."/>
            <person name="Edelmann L."/>
            <person name="Kim U.J."/>
            <person name="Shizuya H."/>
            <person name="Simon M.I."/>
            <person name="Dumanski J.P."/>
            <person name="Peyrard M."/>
            <person name="Kedra D."/>
            <person name="Seroussi E."/>
            <person name="Fransson I."/>
            <person name="Tapia I."/>
            <person name="Bruder C.E."/>
            <person name="O'Brien K.P."/>
            <person name="Wilkinson P."/>
            <person name="Bodenteich A."/>
            <person name="Hartman K."/>
            <person name="Hu X."/>
            <person name="Khan A.S."/>
            <person name="Lane L."/>
            <person name="Tilahun Y."/>
            <person name="Wright H."/>
        </authorList>
    </citation>
    <scope>NUCLEOTIDE SEQUENCE [LARGE SCALE GENOMIC DNA] (IMGT ALLELE IGLV3-25*03)</scope>
</reference>
<reference key="2">
    <citation type="journal article" date="1978" name="Biochemistry">
        <title>Amino acid sequence of the variable region of the light (lambda) chain from human myeloma cryoimmunoglobulin IgG Hil.</title>
        <authorList>
            <person name="Lopez de Castro J.A."/>
            <person name="Chiu Y.-Y.H."/>
            <person name="Poljak R.J."/>
        </authorList>
    </citation>
    <scope>PROTEIN SEQUENCE OF 20-112</scope>
</reference>
<reference key="3">
    <citation type="journal article" date="2001" name="Exp. Clin. Immunogenet.">
        <title>Nomenclature of the human immunoglobulin lambda (IGL) genes.</title>
        <authorList>
            <person name="Lefranc M.P."/>
        </authorList>
    </citation>
    <scope>NOMENCLATURE</scope>
</reference>
<reference key="4">
    <citation type="book" date="2001" name="The Immunoglobulin FactsBook.">
        <title>The Immunoglobulin FactsBook.</title>
        <editorList>
            <person name="Lefranc M.P."/>
            <person name="Lefranc G."/>
        </editorList>
        <authorList>
            <person name="Lefranc M.P."/>
            <person name="Lefranc G."/>
        </authorList>
    </citation>
    <scope>NOMENCLATURE</scope>
</reference>
<reference key="5">
    <citation type="journal article" date="2007" name="Annu. Rev. Genet.">
        <title>Immunoglobulin somatic hypermutation.</title>
        <authorList>
            <person name="Teng G."/>
            <person name="Papavasiliou F.N."/>
        </authorList>
    </citation>
    <scope>REVIEW ON SOMATIC HYPERMUTATION</scope>
</reference>
<reference key="6">
    <citation type="journal article" date="2010" name="J. Allergy Clin. Immunol.">
        <title>Structure and function of immunoglobulins.</title>
        <authorList>
            <person name="Schroeder H.W. Jr."/>
            <person name="Cavacini L."/>
        </authorList>
    </citation>
    <scope>REVIEW ON IMMUNOGLOBULINS</scope>
</reference>
<reference key="7">
    <citation type="journal article" date="2012" name="Nat. Rev. Immunol.">
        <title>Molecular programming of B cell memory.</title>
        <authorList>
            <person name="McHeyzer-Williams M."/>
            <person name="Okitsu S."/>
            <person name="Wang N."/>
            <person name="McHeyzer-Williams L."/>
        </authorList>
    </citation>
    <scope>REVIEW ON FUNCTION</scope>
</reference>
<reference key="8">
    <citation type="journal article" date="2014" name="Front. Immunol.">
        <title>Immunoglobulin and T Cell Receptor Genes: IMGT((R)) and the Birth and Rise of Immunoinformatics.</title>
        <authorList>
            <person name="Lefranc M.P."/>
        </authorList>
    </citation>
    <scope>NOMENCLATURE</scope>
</reference>
<keyword id="KW-1064">Adaptive immunity</keyword>
<keyword id="KW-1003">Cell membrane</keyword>
<keyword id="KW-0903">Direct protein sequencing</keyword>
<keyword id="KW-1015">Disulfide bond</keyword>
<keyword id="KW-0391">Immunity</keyword>
<keyword id="KW-1280">Immunoglobulin</keyword>
<keyword id="KW-0393">Immunoglobulin domain</keyword>
<keyword id="KW-0472">Membrane</keyword>
<keyword id="KW-1267">Proteomics identification</keyword>
<keyword id="KW-1185">Reference proteome</keyword>
<keyword id="KW-0964">Secreted</keyword>
<keyword id="KW-0732">Signal</keyword>
<feature type="signal peptide" evidence="3">
    <location>
        <begin position="1"/>
        <end position="19"/>
    </location>
</feature>
<feature type="chain" id="PRO_0000059846" description="Immunoglobulin lambda variable 3-25" evidence="3">
    <location>
        <begin position="20"/>
        <end position="112"/>
    </location>
</feature>
<feature type="domain" description="Ig-like" evidence="2">
    <location>
        <begin position="20"/>
        <end position="112" status="greater than"/>
    </location>
</feature>
<feature type="region of interest" description="Framework-1" evidence="1">
    <location>
        <begin position="20"/>
        <end position="41"/>
    </location>
</feature>
<feature type="region of interest" description="Complementarity-determining-1" evidence="1">
    <location>
        <begin position="42"/>
        <end position="50"/>
    </location>
</feature>
<feature type="region of interest" description="Framework-2" evidence="1">
    <location>
        <begin position="51"/>
        <end position="67"/>
    </location>
</feature>
<feature type="region of interest" description="Complementarity-determining-2" evidence="1">
    <location>
        <begin position="68"/>
        <end position="70"/>
    </location>
</feature>
<feature type="region of interest" description="Framework-3" evidence="1">
    <location>
        <begin position="71"/>
        <end position="106"/>
    </location>
</feature>
<feature type="region of interest" description="Complementarity-determining-2" evidence="1">
    <location>
        <begin position="107"/>
        <end position="112"/>
    </location>
</feature>
<feature type="disulfide bond" evidence="2">
    <location>
        <begin position="41"/>
        <end position="106"/>
    </location>
</feature>
<feature type="sequence conflict" description="In Ref. 2; AA sequence." evidence="10" ref="2">
    <original>GD</original>
    <variation>AN</variation>
    <location>
        <begin position="43"/>
        <end position="44"/>
    </location>
</feature>
<feature type="sequence conflict" description="In Ref. 2; AA sequence." evidence="10" ref="2">
    <original>K</original>
    <variation>N</variation>
    <location>
        <position position="48"/>
    </location>
</feature>
<feature type="sequence conflict" description="In Ref. 2; AA sequence." evidence="10" ref="2">
    <original>Q</original>
    <variation>R</variation>
    <location>
        <position position="60"/>
    </location>
</feature>
<feature type="sequence conflict" description="In Ref. 2; AA sequence." evidence="10" ref="2">
    <original>L</original>
    <variation>M</variation>
    <location>
        <position position="64"/>
    </location>
</feature>
<feature type="sequence conflict" description="In Ref. 2; AA sequence." evidence="10" ref="2">
    <original>SE</original>
    <variation>TQ</variation>
    <location>
        <begin position="70"/>
        <end position="71"/>
    </location>
</feature>
<feature type="sequence conflict" description="In Ref. 2; AA sequence." evidence="10" ref="2">
    <original>E</original>
    <variation>Q</variation>
    <location>
        <position position="78"/>
    </location>
</feature>
<feature type="sequence conflict" description="In Ref. 2; AA sequence." evidence="10" ref="2">
    <original>GSS</original>
    <variation>SST</variation>
    <location>
        <begin position="82"/>
        <end position="84"/>
    </location>
</feature>
<feature type="sequence conflict" description="In Ref. 2; AA sequence." evidence="10" ref="2">
    <original>SADS</original>
    <variation>AWDN</variation>
    <location>
        <begin position="108"/>
        <end position="111"/>
    </location>
</feature>
<feature type="non-terminal residue">
    <location>
        <position position="112"/>
    </location>
</feature>
<protein>
    <recommendedName>
        <fullName evidence="4 9">Immunoglobulin lambda variable 3-25</fullName>
    </recommendedName>
    <alternativeName>
        <fullName evidence="11">Ig lambda chain V-IV region Hil</fullName>
    </alternativeName>
</protein>
<sequence length="112" mass="12011">MAWIPLLLPLLTLCTGSEASYELTQPPSVSVSPGQTARITCSGDALPKQYAYWYQQKPGQAPVLVIYKDSERPSGIPERFSGSSSGTTVTLTISGVQAEDEADYYCQSADSS</sequence>
<comment type="function">
    <text evidence="5 6 7 8">V region of the variable domain of immunoglobulin light chains that participates in the antigen recognition (PubMed:24600447). Immunoglobulins, also known as antibodies, are membrane-bound or secreted glycoproteins produced by B lymphocytes. In the recognition phase of humoral immunity, the membrane-bound immunoglobulins serve as receptors which, upon binding of a specific antigen, trigger the clonal expansion and differentiation of B lymphocytes into immunoglobulins-secreting plasma cells. Secreted immunoglobulins mediate the effector phase of humoral immunity, which results in the elimination of bound antigens (PubMed:20176268, PubMed:22158414). The antigen binding site is formed by the variable domain of one heavy chain, together with that of its associated light chain. Thus, each immunoglobulin has two antigen binding sites with remarkable affinity for a particular antigen. The variable domains are assembled by a process called V-(D)-J rearrangement and can then be subjected to somatic hypermutations which, after exposure to antigen and selection, allow affinity maturation for a particular antigen (PubMed:17576170, PubMed:20176268).</text>
</comment>
<comment type="subunit">
    <text evidence="6">Immunoglobulins are composed of two identical heavy chains and two identical light chains; disulfide-linked.</text>
</comment>
<comment type="subcellular location">
    <subcellularLocation>
        <location evidence="6 7">Secreted</location>
    </subcellularLocation>
    <subcellularLocation>
        <location evidence="6 7">Cell membrane</location>
    </subcellularLocation>
</comment>
<comment type="polymorphism">
    <text>There are several alleles. The sequence shown is that of IMGT allele IGLV3-25*03.</text>
</comment>
<comment type="caution">
    <text evidence="10">For an example of a full-length immunoglobulin lambda light chain see AC P0DOX8.</text>
</comment>
<gene>
    <name evidence="4 9" type="primary">IGLV3-25</name>
</gene>
<organism>
    <name type="scientific">Homo sapiens</name>
    <name type="common">Human</name>
    <dbReference type="NCBI Taxonomy" id="9606"/>
    <lineage>
        <taxon>Eukaryota</taxon>
        <taxon>Metazoa</taxon>
        <taxon>Chordata</taxon>
        <taxon>Craniata</taxon>
        <taxon>Vertebrata</taxon>
        <taxon>Euteleostomi</taxon>
        <taxon>Mammalia</taxon>
        <taxon>Eutheria</taxon>
        <taxon>Euarchontoglires</taxon>
        <taxon>Primates</taxon>
        <taxon>Haplorrhini</taxon>
        <taxon>Catarrhini</taxon>
        <taxon>Hominidae</taxon>
        <taxon>Homo</taxon>
    </lineage>
</organism>
<proteinExistence type="evidence at protein level"/>
<accession>P01717</accession>
<accession>A0A075B6J4</accession>
<name>LV325_HUMAN</name>